<gene>
    <name type="ordered locus">Sbal195_2933</name>
</gene>
<accession>A9KUT1</accession>
<evidence type="ECO:0000250" key="1"/>
<evidence type="ECO:0000255" key="2">
    <source>
        <dbReference type="PROSITE-ProRule" id="PRU00648"/>
    </source>
</evidence>
<evidence type="ECO:0000305" key="3"/>
<comment type="function">
    <text evidence="1">Glycosidase.</text>
</comment>
<comment type="cofactor">
    <cofactor evidence="1">
        <name>NAD(+)</name>
        <dbReference type="ChEBI" id="CHEBI:57540"/>
    </cofactor>
    <text evidence="1">Binds 1 NAD(+) per subunit. The NAD(+) cannot dissociate.</text>
</comment>
<comment type="PTM">
    <text>Predicted to be exported by the Tat system. The position of the signal peptide cleavage has not been experimentally proven.</text>
</comment>
<comment type="similarity">
    <text evidence="3">Belongs to the Gfo/Idh/MocA family. Glycosyl hydrolase 109 subfamily.</text>
</comment>
<proteinExistence type="inferred from homology"/>
<reference key="1">
    <citation type="submission" date="2007-11" db="EMBL/GenBank/DDBJ databases">
        <title>Complete sequence of chromosome of Shewanella baltica OS195.</title>
        <authorList>
            <consortium name="US DOE Joint Genome Institute"/>
            <person name="Copeland A."/>
            <person name="Lucas S."/>
            <person name="Lapidus A."/>
            <person name="Barry K."/>
            <person name="Glavina del Rio T."/>
            <person name="Dalin E."/>
            <person name="Tice H."/>
            <person name="Pitluck S."/>
            <person name="Chain P."/>
            <person name="Malfatti S."/>
            <person name="Shin M."/>
            <person name="Vergez L."/>
            <person name="Schmutz J."/>
            <person name="Larimer F."/>
            <person name="Land M."/>
            <person name="Hauser L."/>
            <person name="Kyrpides N."/>
            <person name="Kim E."/>
            <person name="Brettar I."/>
            <person name="Rodrigues J."/>
            <person name="Konstantinidis K."/>
            <person name="Klappenbach J."/>
            <person name="Hofle M."/>
            <person name="Tiedje J."/>
            <person name="Richardson P."/>
        </authorList>
    </citation>
    <scope>NUCLEOTIDE SEQUENCE [LARGE SCALE GENOMIC DNA]</scope>
    <source>
        <strain>OS195</strain>
    </source>
</reference>
<dbReference type="EC" id="3.2.1.-"/>
<dbReference type="EMBL" id="CP000891">
    <property type="protein sequence ID" value="ABX50099.1"/>
    <property type="molecule type" value="Genomic_DNA"/>
</dbReference>
<dbReference type="RefSeq" id="WP_006085502.1">
    <property type="nucleotide sequence ID" value="NC_009997.1"/>
</dbReference>
<dbReference type="SMR" id="A9KUT1"/>
<dbReference type="CAZy" id="GH109">
    <property type="family name" value="Glycoside Hydrolase Family 109"/>
</dbReference>
<dbReference type="KEGG" id="sbn:Sbal195_2933"/>
<dbReference type="HOGENOM" id="CLU_046965_0_0_6"/>
<dbReference type="Proteomes" id="UP000000770">
    <property type="component" value="Chromosome"/>
</dbReference>
<dbReference type="GO" id="GO:0016798">
    <property type="term" value="F:hydrolase activity, acting on glycosyl bonds"/>
    <property type="evidence" value="ECO:0007669"/>
    <property type="project" value="UniProtKB-KW"/>
</dbReference>
<dbReference type="GO" id="GO:0000166">
    <property type="term" value="F:nucleotide binding"/>
    <property type="evidence" value="ECO:0007669"/>
    <property type="project" value="InterPro"/>
</dbReference>
<dbReference type="Gene3D" id="3.30.360.10">
    <property type="entry name" value="Dihydrodipicolinate Reductase, domain 2"/>
    <property type="match status" value="1"/>
</dbReference>
<dbReference type="Gene3D" id="3.40.50.720">
    <property type="entry name" value="NAD(P)-binding Rossmann-like Domain"/>
    <property type="match status" value="1"/>
</dbReference>
<dbReference type="InterPro" id="IPR000683">
    <property type="entry name" value="Gfo/Idh/MocA-like_OxRdtase_N"/>
</dbReference>
<dbReference type="InterPro" id="IPR050463">
    <property type="entry name" value="Gfo/Idh/MocA_oxidrdct_glycsds"/>
</dbReference>
<dbReference type="InterPro" id="IPR049303">
    <property type="entry name" value="Glyco_hydro_109_C"/>
</dbReference>
<dbReference type="InterPro" id="IPR036291">
    <property type="entry name" value="NAD(P)-bd_dom_sf"/>
</dbReference>
<dbReference type="InterPro" id="IPR006311">
    <property type="entry name" value="TAT_signal"/>
</dbReference>
<dbReference type="InterPro" id="IPR019546">
    <property type="entry name" value="TAT_signal_bac_arc"/>
</dbReference>
<dbReference type="NCBIfam" id="TIGR01409">
    <property type="entry name" value="TAT_signal_seq"/>
    <property type="match status" value="1"/>
</dbReference>
<dbReference type="PANTHER" id="PTHR43818">
    <property type="entry name" value="BCDNA.GH03377"/>
    <property type="match status" value="1"/>
</dbReference>
<dbReference type="PANTHER" id="PTHR43818:SF1">
    <property type="entry name" value="GLYCOSYL HYDROLASE FAMILY 109 PROTEIN"/>
    <property type="match status" value="1"/>
</dbReference>
<dbReference type="Pfam" id="PF01408">
    <property type="entry name" value="GFO_IDH_MocA"/>
    <property type="match status" value="1"/>
</dbReference>
<dbReference type="Pfam" id="PF21252">
    <property type="entry name" value="Glyco_hydro_109_C"/>
    <property type="match status" value="1"/>
</dbReference>
<dbReference type="Pfam" id="PF10518">
    <property type="entry name" value="TAT_signal"/>
    <property type="match status" value="1"/>
</dbReference>
<dbReference type="SUPFAM" id="SSF51735">
    <property type="entry name" value="NAD(P)-binding Rossmann-fold domains"/>
    <property type="match status" value="1"/>
</dbReference>
<dbReference type="PROSITE" id="PS51318">
    <property type="entry name" value="TAT"/>
    <property type="match status" value="1"/>
</dbReference>
<keyword id="KW-0326">Glycosidase</keyword>
<keyword id="KW-0378">Hydrolase</keyword>
<keyword id="KW-0520">NAD</keyword>
<keyword id="KW-0732">Signal</keyword>
<feature type="signal peptide" description="Tat-type signal" evidence="2">
    <location>
        <begin position="1"/>
        <end position="31"/>
    </location>
</feature>
<feature type="chain" id="PRO_5000296569" description="Glycosyl hydrolase family 109 protein">
    <location>
        <begin position="32"/>
        <end position="459"/>
    </location>
</feature>
<feature type="binding site" evidence="1">
    <location>
        <begin position="64"/>
        <end position="65"/>
    </location>
    <ligand>
        <name>NAD(+)</name>
        <dbReference type="ChEBI" id="CHEBI:57540"/>
    </ligand>
</feature>
<feature type="binding site" evidence="1">
    <location>
        <position position="86"/>
    </location>
    <ligand>
        <name>NAD(+)</name>
        <dbReference type="ChEBI" id="CHEBI:57540"/>
    </ligand>
</feature>
<feature type="binding site" evidence="1">
    <location>
        <begin position="135"/>
        <end position="138"/>
    </location>
    <ligand>
        <name>NAD(+)</name>
        <dbReference type="ChEBI" id="CHEBI:57540"/>
    </ligand>
</feature>
<feature type="binding site" evidence="1">
    <location>
        <begin position="155"/>
        <end position="156"/>
    </location>
    <ligand>
        <name>NAD(+)</name>
        <dbReference type="ChEBI" id="CHEBI:57540"/>
    </ligand>
</feature>
<feature type="binding site" evidence="1">
    <location>
        <position position="184"/>
    </location>
    <ligand>
        <name>NAD(+)</name>
        <dbReference type="ChEBI" id="CHEBI:57540"/>
    </ligand>
</feature>
<feature type="binding site" evidence="1">
    <location>
        <position position="213"/>
    </location>
    <ligand>
        <name>substrate</name>
    </ligand>
</feature>
<feature type="binding site" evidence="1">
    <location>
        <position position="232"/>
    </location>
    <ligand>
        <name>substrate</name>
    </ligand>
</feature>
<feature type="binding site" evidence="1">
    <location>
        <begin position="244"/>
        <end position="247"/>
    </location>
    <ligand>
        <name>substrate</name>
    </ligand>
</feature>
<feature type="binding site" evidence="1">
    <location>
        <position position="244"/>
    </location>
    <ligand>
        <name>NAD(+)</name>
        <dbReference type="ChEBI" id="CHEBI:57540"/>
    </ligand>
</feature>
<feature type="binding site" evidence="1">
    <location>
        <position position="326"/>
    </location>
    <ligand>
        <name>substrate</name>
    </ligand>
</feature>
<organism>
    <name type="scientific">Shewanella baltica (strain OS195)</name>
    <dbReference type="NCBI Taxonomy" id="399599"/>
    <lineage>
        <taxon>Bacteria</taxon>
        <taxon>Pseudomonadati</taxon>
        <taxon>Pseudomonadota</taxon>
        <taxon>Gammaproteobacteria</taxon>
        <taxon>Alteromonadales</taxon>
        <taxon>Shewanellaceae</taxon>
        <taxon>Shewanella</taxon>
    </lineage>
</organism>
<protein>
    <recommendedName>
        <fullName>Glycosyl hydrolase family 109 protein</fullName>
        <ecNumber>3.2.1.-</ecNumber>
    </recommendedName>
</protein>
<name>GH109_SHEB9</name>
<sequence>MHNIHRRNFLKAAGAATAGLVTANIALNAYASSVAPKPQAGKSVIGLIAPKMDVVRVGFIGVGERGFSHVEQFCHLEGVELKAICDTHQAVLDRAIDHIVKQNRPKPAVYTGNDLSYRDLLSRDDIDIVIISTPWEWHAPMAIETMESGKHTFVEVPMALTVEECWQVVDTAERTQKNCMMMENVNYGREELMVLNMVRQGVFGELLHGEAAYIHELRWQMKEIDHKTGSWRTYWHTKRNGNLYPTHGLGPVSQYMNINRGDRFDYLTSMSSPALGRALYAKREFPADHERNQLKYINGDINTSLIKTVKGRTIMVQHDTTTPRPYSRHNLIQGTNGVFAGFPNRIAVENGGFGQSYHEWDMDMQKWYDKYDHPLWQRIGKEAEINGGHGGMDFVMLWRMIYCLRNGEALDQDVYDGASWSVVNILSEHSLNDRSNSVTFPDFTRGAWQTAKPLGIVGA</sequence>